<sequence length="49" mass="5343">MRSRVISSGRISQYSKLRNLVLYPSNTGPSNNRPCAGALGMYFLGPALK</sequence>
<accession>Q8TGP0</accession>
<gene>
    <name type="ordered locus">YGL063C-A</name>
</gene>
<evidence type="ECO:0000305" key="1"/>
<evidence type="ECO:0000305" key="2">
    <source>
    </source>
</evidence>
<feature type="chain" id="PRO_0000299921" description="Putative uncharacterized protein YGL063C-A">
    <location>
        <begin position="1"/>
        <end position="49"/>
    </location>
</feature>
<protein>
    <recommendedName>
        <fullName>Putative uncharacterized protein YGL063C-A</fullName>
    </recommendedName>
</protein>
<reference key="1">
    <citation type="journal article" date="1997" name="Nature">
        <title>The nucleotide sequence of Saccharomyces cerevisiae chromosome VII.</title>
        <authorList>
            <person name="Tettelin H."/>
            <person name="Agostoni-Carbone M.L."/>
            <person name="Albermann K."/>
            <person name="Albers M."/>
            <person name="Arroyo J."/>
            <person name="Backes U."/>
            <person name="Barreiros T."/>
            <person name="Bertani I."/>
            <person name="Bjourson A.J."/>
            <person name="Brueckner M."/>
            <person name="Bruschi C.V."/>
            <person name="Carignani G."/>
            <person name="Castagnoli L."/>
            <person name="Cerdan E."/>
            <person name="Clemente M.L."/>
            <person name="Coblenz A."/>
            <person name="Coglievina M."/>
            <person name="Coissac E."/>
            <person name="Defoor E."/>
            <person name="Del Bino S."/>
            <person name="Delius H."/>
            <person name="Delneri D."/>
            <person name="de Wergifosse P."/>
            <person name="Dujon B."/>
            <person name="Durand P."/>
            <person name="Entian K.-D."/>
            <person name="Eraso P."/>
            <person name="Escribano V."/>
            <person name="Fabiani L."/>
            <person name="Fartmann B."/>
            <person name="Feroli F."/>
            <person name="Feuermann M."/>
            <person name="Frontali L."/>
            <person name="Garcia-Gonzalez M."/>
            <person name="Garcia-Saez M.I."/>
            <person name="Goffeau A."/>
            <person name="Guerreiro P."/>
            <person name="Hani J."/>
            <person name="Hansen M."/>
            <person name="Hebling U."/>
            <person name="Hernandez K."/>
            <person name="Heumann K."/>
            <person name="Hilger F."/>
            <person name="Hofmann B."/>
            <person name="Indge K.J."/>
            <person name="James C.M."/>
            <person name="Klima R."/>
            <person name="Koetter P."/>
            <person name="Kramer B."/>
            <person name="Kramer W."/>
            <person name="Lauquin G."/>
            <person name="Leuther H."/>
            <person name="Louis E.J."/>
            <person name="Maillier E."/>
            <person name="Marconi A."/>
            <person name="Martegani E."/>
            <person name="Mazon M.J."/>
            <person name="Mazzoni C."/>
            <person name="McReynolds A.D.K."/>
            <person name="Melchioretto P."/>
            <person name="Mewes H.-W."/>
            <person name="Minenkova O."/>
            <person name="Mueller-Auer S."/>
            <person name="Nawrocki A."/>
            <person name="Netter P."/>
            <person name="Neu R."/>
            <person name="Nombela C."/>
            <person name="Oliver S.G."/>
            <person name="Panzeri L."/>
            <person name="Paoluzi S."/>
            <person name="Plevani P."/>
            <person name="Portetelle D."/>
            <person name="Portillo F."/>
            <person name="Potier S."/>
            <person name="Purnelle B."/>
            <person name="Rieger M."/>
            <person name="Riles L."/>
            <person name="Rinaldi T."/>
            <person name="Robben J."/>
            <person name="Rodrigues-Pousada C."/>
            <person name="Rodriguez-Belmonte E."/>
            <person name="Rodriguez-Torres A.M."/>
            <person name="Rose M."/>
            <person name="Ruzzi M."/>
            <person name="Saliola M."/>
            <person name="Sanchez-Perez M."/>
            <person name="Schaefer B."/>
            <person name="Schaefer M."/>
            <person name="Scharfe M."/>
            <person name="Schmidheini T."/>
            <person name="Schreer A."/>
            <person name="Skala J."/>
            <person name="Souciet J.-L."/>
            <person name="Steensma H.Y."/>
            <person name="Talla E."/>
            <person name="Thierry A."/>
            <person name="Vandenbol M."/>
            <person name="van der Aart Q.J.M."/>
            <person name="Van Dyck L."/>
            <person name="Vanoni M."/>
            <person name="Verhasselt P."/>
            <person name="Voet M."/>
            <person name="Volckaert G."/>
            <person name="Wambutt R."/>
            <person name="Watson M.D."/>
            <person name="Weber N."/>
            <person name="Wedler E."/>
            <person name="Wedler H."/>
            <person name="Wipfli P."/>
            <person name="Wolf K."/>
            <person name="Wright L.F."/>
            <person name="Zaccaria P."/>
            <person name="Zimmermann M."/>
            <person name="Zollner A."/>
            <person name="Kleine K."/>
        </authorList>
    </citation>
    <scope>NUCLEOTIDE SEQUENCE [LARGE SCALE GENOMIC DNA]</scope>
    <source>
        <strain>ATCC 204508 / S288c</strain>
    </source>
</reference>
<reference key="2">
    <citation type="journal article" date="2014" name="G3 (Bethesda)">
        <title>The reference genome sequence of Saccharomyces cerevisiae: Then and now.</title>
        <authorList>
            <person name="Engel S.R."/>
            <person name="Dietrich F.S."/>
            <person name="Fisk D.G."/>
            <person name="Binkley G."/>
            <person name="Balakrishnan R."/>
            <person name="Costanzo M.C."/>
            <person name="Dwight S.S."/>
            <person name="Hitz B.C."/>
            <person name="Karra K."/>
            <person name="Nash R.S."/>
            <person name="Weng S."/>
            <person name="Wong E.D."/>
            <person name="Lloyd P."/>
            <person name="Skrzypek M.S."/>
            <person name="Miyasato S.R."/>
            <person name="Simison M."/>
            <person name="Cherry J.M."/>
        </authorList>
    </citation>
    <scope>GENOME REANNOTATION</scope>
    <source>
        <strain>ATCC 204508 / S288c</strain>
    </source>
</reference>
<reference key="3">
    <citation type="journal article" date="2002" name="Nat. Biotechnol.">
        <title>An integrated approach for finding overlooked genes in yeast.</title>
        <authorList>
            <person name="Kumar A."/>
            <person name="Harrison P.M."/>
            <person name="Cheung K.-H."/>
            <person name="Lan N."/>
            <person name="Echols N."/>
            <person name="Bertone P."/>
            <person name="Miller P."/>
            <person name="Gerstein M.B."/>
            <person name="Snyder M."/>
        </authorList>
    </citation>
    <scope>NUCLEOTIDE SEQUENCE [GENOMIC DNA]</scope>
</reference>
<name>YG063_YEAST</name>
<comment type="miscellaneous">
    <text evidence="1">Completely overlaps PUS2.</text>
</comment>
<comment type="caution">
    <text evidence="2">Product of a dubious gene prediction unlikely to encode a functional protein. Because of that it is not part of the S.cerevisiae S288c complete/reference proteome set.</text>
</comment>
<proteinExistence type="uncertain"/>
<organism>
    <name type="scientific">Saccharomyces cerevisiae (strain ATCC 204508 / S288c)</name>
    <name type="common">Baker's yeast</name>
    <dbReference type="NCBI Taxonomy" id="559292"/>
    <lineage>
        <taxon>Eukaryota</taxon>
        <taxon>Fungi</taxon>
        <taxon>Dikarya</taxon>
        <taxon>Ascomycota</taxon>
        <taxon>Saccharomycotina</taxon>
        <taxon>Saccharomycetes</taxon>
        <taxon>Saccharomycetales</taxon>
        <taxon>Saccharomycetaceae</taxon>
        <taxon>Saccharomyces</taxon>
    </lineage>
</organism>
<dbReference type="EMBL" id="Z72585">
    <property type="status" value="NOT_ANNOTATED_CDS"/>
    <property type="molecule type" value="Genomic_DNA"/>
</dbReference>
<dbReference type="EMBL" id="AF479949">
    <property type="protein sequence ID" value="AAL79262.1"/>
    <property type="molecule type" value="Genomic_DNA"/>
</dbReference>
<dbReference type="STRING" id="4932.YGL063C-A"/>
<dbReference type="PaxDb" id="4932-YGL063C-A"/>
<dbReference type="EnsemblFungi" id="YGL063C-A_mRNA">
    <property type="protein sequence ID" value="YGL063C-A"/>
    <property type="gene ID" value="YGL063C-A"/>
</dbReference>
<dbReference type="AGR" id="SGD:S000028633"/>
<dbReference type="SGD" id="S000028633">
    <property type="gene designation" value="YGL063C-A"/>
</dbReference>
<dbReference type="HOGENOM" id="CLU_3144074_0_0_1"/>